<reference key="1">
    <citation type="journal article" date="2004" name="Nucleic Acids Res.">
        <title>Thermoadaptation trait revealed by the genome sequence of thermophilic Geobacillus kaustophilus.</title>
        <authorList>
            <person name="Takami H."/>
            <person name="Takaki Y."/>
            <person name="Chee G.-J."/>
            <person name="Nishi S."/>
            <person name="Shimamura S."/>
            <person name="Suzuki H."/>
            <person name="Matsui S."/>
            <person name="Uchiyama I."/>
        </authorList>
    </citation>
    <scope>NUCLEOTIDE SEQUENCE [LARGE SCALE GENOMIC DNA]</scope>
    <source>
        <strain>HTA426</strain>
    </source>
</reference>
<accession>Q5L3D0</accession>
<sequence length="346" mass="36816">MAKAYKQAGVDIEAGYQAVALMKEHVQKTMRPEVLGGIGGFGGLFDLSALGYRQPVLISGTDGVGTKLKLAFLLDRHDTIGIDCVAMCVNDIIVQGAEPLFFLDYIACGKAVPEKIAAIVKGVADGCVEAGCALIGGETAEMPGMYDEDEYDLAGFAVGVAEKERLITGETIQAGDALVGLPSSGLHSNGYSLVRRIVFEQAKLSLDEIYEPLDVPLGEELLKPTRIYAKLLRSVRERFTIKGMAHITGGGLIENIPRMLPPGIGARIQLGSWPILPIFDFLREKGSLEEEEMFSVFNMGIGLVLAVSPETAAPLVEWLSERGEPAYIIGEVAKGAGVSFAGGGRA</sequence>
<evidence type="ECO:0000255" key="1">
    <source>
        <dbReference type="HAMAP-Rule" id="MF_00741"/>
    </source>
</evidence>
<evidence type="ECO:0007829" key="2">
    <source>
        <dbReference type="PDB" id="2Z01"/>
    </source>
</evidence>
<feature type="chain" id="PRO_0000258356" description="Phosphoribosylformylglycinamidine cyclo-ligase">
    <location>
        <begin position="1"/>
        <end position="346"/>
    </location>
</feature>
<feature type="helix" evidence="2">
    <location>
        <begin position="18"/>
        <end position="29"/>
    </location>
</feature>
<feature type="helix" evidence="2">
    <location>
        <begin position="47"/>
        <end position="50"/>
    </location>
</feature>
<feature type="strand" evidence="2">
    <location>
        <begin position="53"/>
        <end position="63"/>
    </location>
</feature>
<feature type="helix" evidence="2">
    <location>
        <begin position="67"/>
        <end position="74"/>
    </location>
</feature>
<feature type="helix" evidence="2">
    <location>
        <begin position="80"/>
        <end position="93"/>
    </location>
</feature>
<feature type="turn" evidence="2">
    <location>
        <begin position="94"/>
        <end position="96"/>
    </location>
</feature>
<feature type="strand" evidence="2">
    <location>
        <begin position="98"/>
        <end position="110"/>
    </location>
</feature>
<feature type="helix" evidence="2">
    <location>
        <begin position="113"/>
        <end position="130"/>
    </location>
</feature>
<feature type="strand" evidence="2">
    <location>
        <begin position="133"/>
        <end position="136"/>
    </location>
</feature>
<feature type="strand" evidence="2">
    <location>
        <begin position="151"/>
        <end position="162"/>
    </location>
</feature>
<feature type="helix" evidence="2">
    <location>
        <begin position="163"/>
        <end position="165"/>
    </location>
</feature>
<feature type="strand" evidence="2">
    <location>
        <begin position="177"/>
        <end position="182"/>
    </location>
</feature>
<feature type="strand" evidence="2">
    <location>
        <begin position="184"/>
        <end position="186"/>
    </location>
</feature>
<feature type="helix" evidence="2">
    <location>
        <begin position="191"/>
        <end position="199"/>
    </location>
</feature>
<feature type="helix" evidence="2">
    <location>
        <begin position="217"/>
        <end position="222"/>
    </location>
</feature>
<feature type="helix" evidence="2">
    <location>
        <begin position="229"/>
        <end position="238"/>
    </location>
</feature>
<feature type="strand" evidence="2">
    <location>
        <begin position="243"/>
        <end position="246"/>
    </location>
</feature>
<feature type="helix" evidence="2">
    <location>
        <begin position="251"/>
        <end position="259"/>
    </location>
</feature>
<feature type="strand" evidence="2">
    <location>
        <begin position="264"/>
        <end position="269"/>
    </location>
</feature>
<feature type="helix" evidence="2">
    <location>
        <begin position="277"/>
        <end position="285"/>
    </location>
</feature>
<feature type="helix" evidence="2">
    <location>
        <begin position="290"/>
        <end position="296"/>
    </location>
</feature>
<feature type="strand" evidence="2">
    <location>
        <begin position="301"/>
        <end position="307"/>
    </location>
</feature>
<feature type="helix" evidence="2">
    <location>
        <begin position="309"/>
        <end position="311"/>
    </location>
</feature>
<feature type="helix" evidence="2">
    <location>
        <begin position="312"/>
        <end position="321"/>
    </location>
</feature>
<feature type="strand" evidence="2">
    <location>
        <begin position="327"/>
        <end position="341"/>
    </location>
</feature>
<keyword id="KW-0002">3D-structure</keyword>
<keyword id="KW-0067">ATP-binding</keyword>
<keyword id="KW-0963">Cytoplasm</keyword>
<keyword id="KW-0436">Ligase</keyword>
<keyword id="KW-0547">Nucleotide-binding</keyword>
<keyword id="KW-0658">Purine biosynthesis</keyword>
<keyword id="KW-1185">Reference proteome</keyword>
<dbReference type="EC" id="6.3.3.1" evidence="1"/>
<dbReference type="EMBL" id="BA000043">
    <property type="protein sequence ID" value="BAD74550.1"/>
    <property type="molecule type" value="Genomic_DNA"/>
</dbReference>
<dbReference type="RefSeq" id="WP_011229774.1">
    <property type="nucleotide sequence ID" value="NC_006510.1"/>
</dbReference>
<dbReference type="PDB" id="2Z01">
    <property type="method" value="X-ray"/>
    <property type="resolution" value="2.20 A"/>
    <property type="chains" value="A=1-346"/>
</dbReference>
<dbReference type="PDBsum" id="2Z01"/>
<dbReference type="SMR" id="Q5L3D0"/>
<dbReference type="STRING" id="235909.GK0265"/>
<dbReference type="KEGG" id="gka:GK0265"/>
<dbReference type="eggNOG" id="COG0150">
    <property type="taxonomic scope" value="Bacteria"/>
</dbReference>
<dbReference type="HOGENOM" id="CLU_047116_0_0_9"/>
<dbReference type="UniPathway" id="UPA00074">
    <property type="reaction ID" value="UER00129"/>
</dbReference>
<dbReference type="EvolutionaryTrace" id="Q5L3D0"/>
<dbReference type="Proteomes" id="UP000001172">
    <property type="component" value="Chromosome"/>
</dbReference>
<dbReference type="GO" id="GO:0005829">
    <property type="term" value="C:cytosol"/>
    <property type="evidence" value="ECO:0007669"/>
    <property type="project" value="TreeGrafter"/>
</dbReference>
<dbReference type="GO" id="GO:0005524">
    <property type="term" value="F:ATP binding"/>
    <property type="evidence" value="ECO:0007669"/>
    <property type="project" value="UniProtKB-KW"/>
</dbReference>
<dbReference type="GO" id="GO:0004637">
    <property type="term" value="F:phosphoribosylamine-glycine ligase activity"/>
    <property type="evidence" value="ECO:0007669"/>
    <property type="project" value="TreeGrafter"/>
</dbReference>
<dbReference type="GO" id="GO:0004641">
    <property type="term" value="F:phosphoribosylformylglycinamidine cyclo-ligase activity"/>
    <property type="evidence" value="ECO:0007669"/>
    <property type="project" value="UniProtKB-UniRule"/>
</dbReference>
<dbReference type="GO" id="GO:0006189">
    <property type="term" value="P:'de novo' IMP biosynthetic process"/>
    <property type="evidence" value="ECO:0007669"/>
    <property type="project" value="UniProtKB-UniRule"/>
</dbReference>
<dbReference type="GO" id="GO:0046084">
    <property type="term" value="P:adenine biosynthetic process"/>
    <property type="evidence" value="ECO:0007669"/>
    <property type="project" value="TreeGrafter"/>
</dbReference>
<dbReference type="CDD" id="cd02196">
    <property type="entry name" value="PurM"/>
    <property type="match status" value="1"/>
</dbReference>
<dbReference type="FunFam" id="3.30.1330.10:FF:000001">
    <property type="entry name" value="Phosphoribosylformylglycinamidine cyclo-ligase"/>
    <property type="match status" value="1"/>
</dbReference>
<dbReference type="FunFam" id="3.90.650.10:FF:000001">
    <property type="entry name" value="Phosphoribosylformylglycinamidine cyclo-ligase"/>
    <property type="match status" value="1"/>
</dbReference>
<dbReference type="Gene3D" id="3.90.650.10">
    <property type="entry name" value="PurM-like C-terminal domain"/>
    <property type="match status" value="1"/>
</dbReference>
<dbReference type="Gene3D" id="3.30.1330.10">
    <property type="entry name" value="PurM-like, N-terminal domain"/>
    <property type="match status" value="1"/>
</dbReference>
<dbReference type="HAMAP" id="MF_00741">
    <property type="entry name" value="AIRS"/>
    <property type="match status" value="1"/>
</dbReference>
<dbReference type="InterPro" id="IPR010918">
    <property type="entry name" value="PurM-like_C_dom"/>
</dbReference>
<dbReference type="InterPro" id="IPR036676">
    <property type="entry name" value="PurM-like_C_sf"/>
</dbReference>
<dbReference type="InterPro" id="IPR016188">
    <property type="entry name" value="PurM-like_N"/>
</dbReference>
<dbReference type="InterPro" id="IPR036921">
    <property type="entry name" value="PurM-like_N_sf"/>
</dbReference>
<dbReference type="InterPro" id="IPR004733">
    <property type="entry name" value="PurM_cligase"/>
</dbReference>
<dbReference type="NCBIfam" id="TIGR00878">
    <property type="entry name" value="purM"/>
    <property type="match status" value="1"/>
</dbReference>
<dbReference type="PANTHER" id="PTHR10520:SF12">
    <property type="entry name" value="TRIFUNCTIONAL PURINE BIOSYNTHETIC PROTEIN ADENOSINE-3"/>
    <property type="match status" value="1"/>
</dbReference>
<dbReference type="PANTHER" id="PTHR10520">
    <property type="entry name" value="TRIFUNCTIONAL PURINE BIOSYNTHETIC PROTEIN ADENOSINE-3-RELATED"/>
    <property type="match status" value="1"/>
</dbReference>
<dbReference type="Pfam" id="PF00586">
    <property type="entry name" value="AIRS"/>
    <property type="match status" value="1"/>
</dbReference>
<dbReference type="Pfam" id="PF02769">
    <property type="entry name" value="AIRS_C"/>
    <property type="match status" value="1"/>
</dbReference>
<dbReference type="SUPFAM" id="SSF56042">
    <property type="entry name" value="PurM C-terminal domain-like"/>
    <property type="match status" value="1"/>
</dbReference>
<dbReference type="SUPFAM" id="SSF55326">
    <property type="entry name" value="PurM N-terminal domain-like"/>
    <property type="match status" value="1"/>
</dbReference>
<name>PUR5_GEOKA</name>
<protein>
    <recommendedName>
        <fullName evidence="1">Phosphoribosylformylglycinamidine cyclo-ligase</fullName>
        <ecNumber evidence="1">6.3.3.1</ecNumber>
    </recommendedName>
    <alternativeName>
        <fullName evidence="1">AIR synthase</fullName>
    </alternativeName>
    <alternativeName>
        <fullName evidence="1">AIRS</fullName>
    </alternativeName>
    <alternativeName>
        <fullName evidence="1">Phosphoribosyl-aminoimidazole synthetase</fullName>
    </alternativeName>
</protein>
<comment type="catalytic activity">
    <reaction evidence="1">
        <text>2-formamido-N(1)-(5-O-phospho-beta-D-ribosyl)acetamidine + ATP = 5-amino-1-(5-phospho-beta-D-ribosyl)imidazole + ADP + phosphate + H(+)</text>
        <dbReference type="Rhea" id="RHEA:23032"/>
        <dbReference type="ChEBI" id="CHEBI:15378"/>
        <dbReference type="ChEBI" id="CHEBI:30616"/>
        <dbReference type="ChEBI" id="CHEBI:43474"/>
        <dbReference type="ChEBI" id="CHEBI:137981"/>
        <dbReference type="ChEBI" id="CHEBI:147287"/>
        <dbReference type="ChEBI" id="CHEBI:456216"/>
        <dbReference type="EC" id="6.3.3.1"/>
    </reaction>
</comment>
<comment type="pathway">
    <text evidence="1">Purine metabolism; IMP biosynthesis via de novo pathway; 5-amino-1-(5-phospho-D-ribosyl)imidazole from N(2)-formyl-N(1)-(5-phospho-D-ribosyl)glycinamide: step 2/2.</text>
</comment>
<comment type="subcellular location">
    <subcellularLocation>
        <location evidence="1">Cytoplasm</location>
    </subcellularLocation>
</comment>
<comment type="similarity">
    <text evidence="1">Belongs to the AIR synthase family.</text>
</comment>
<gene>
    <name evidence="1" type="primary">purM</name>
    <name type="ordered locus">GK0265</name>
</gene>
<proteinExistence type="evidence at protein level"/>
<organism>
    <name type="scientific">Geobacillus kaustophilus (strain HTA426)</name>
    <dbReference type="NCBI Taxonomy" id="235909"/>
    <lineage>
        <taxon>Bacteria</taxon>
        <taxon>Bacillati</taxon>
        <taxon>Bacillota</taxon>
        <taxon>Bacilli</taxon>
        <taxon>Bacillales</taxon>
        <taxon>Anoxybacillaceae</taxon>
        <taxon>Geobacillus</taxon>
        <taxon>Geobacillus thermoleovorans group</taxon>
    </lineage>
</organism>